<keyword id="KW-0002">3D-structure</keyword>
<keyword id="KW-0597">Phosphoprotein</keyword>
<keyword id="KW-0653">Protein transport</keyword>
<keyword id="KW-1185">Reference proteome</keyword>
<keyword id="KW-0677">Repeat</keyword>
<keyword id="KW-0813">Transport</keyword>
<keyword id="KW-0926">Vacuole</keyword>
<keyword id="KW-0853">WD repeat</keyword>
<reference key="1">
    <citation type="journal article" date="1997" name="J. Biol. Chem.">
        <title>Vam2/Vps41p and Vam6/Vps39p are components of a protein complex on the vacuolar membranes and involved in the vacuolar assembly in the yeast Saccharomyces cerevisiae.</title>
        <authorList>
            <person name="Nakamura N."/>
            <person name="Hirata A."/>
            <person name="Ohsumi Y."/>
            <person name="Wada Y."/>
        </authorList>
    </citation>
    <scope>NUCLEOTIDE SEQUENCE [GENOMIC DNA]</scope>
    <source>
        <strain>ATCC 26786 / X2180-1A</strain>
    </source>
</reference>
<reference key="2">
    <citation type="journal article" date="1995" name="Yeast">
        <title>Analysis of a 32.8 kb segment of yeast chromosome IV reveals 21 open reading frames, including TPS2, PPH3, RAD55, SED1, PDC2, AFR1, SSS1, SLU7 and a tRNA for arginine.</title>
        <authorList>
            <person name="Coster F."/>
            <person name="Jonniaux J.-L."/>
            <person name="Goffeau A."/>
        </authorList>
    </citation>
    <scope>NUCLEOTIDE SEQUENCE [GENOMIC DNA]</scope>
    <source>
        <strain>ATCC 96604 / S288c / FY1679</strain>
    </source>
</reference>
<reference key="3">
    <citation type="journal article" date="1997" name="Nature">
        <title>The nucleotide sequence of Saccharomyces cerevisiae chromosome IV.</title>
        <authorList>
            <person name="Jacq C."/>
            <person name="Alt-Moerbe J."/>
            <person name="Andre B."/>
            <person name="Arnold W."/>
            <person name="Bahr A."/>
            <person name="Ballesta J.P.G."/>
            <person name="Bargues M."/>
            <person name="Baron L."/>
            <person name="Becker A."/>
            <person name="Biteau N."/>
            <person name="Bloecker H."/>
            <person name="Blugeon C."/>
            <person name="Boskovic J."/>
            <person name="Brandt P."/>
            <person name="Brueckner M."/>
            <person name="Buitrago M.J."/>
            <person name="Coster F."/>
            <person name="Delaveau T."/>
            <person name="del Rey F."/>
            <person name="Dujon B."/>
            <person name="Eide L.G."/>
            <person name="Garcia-Cantalejo J.M."/>
            <person name="Goffeau A."/>
            <person name="Gomez-Peris A."/>
            <person name="Granotier C."/>
            <person name="Hanemann V."/>
            <person name="Hankeln T."/>
            <person name="Hoheisel J.D."/>
            <person name="Jaeger W."/>
            <person name="Jimenez A."/>
            <person name="Jonniaux J.-L."/>
            <person name="Kraemer C."/>
            <person name="Kuester H."/>
            <person name="Laamanen P."/>
            <person name="Legros Y."/>
            <person name="Louis E.J."/>
            <person name="Moeller-Rieker S."/>
            <person name="Monnet A."/>
            <person name="Moro M."/>
            <person name="Mueller-Auer S."/>
            <person name="Nussbaumer B."/>
            <person name="Paricio N."/>
            <person name="Paulin L."/>
            <person name="Perea J."/>
            <person name="Perez-Alonso M."/>
            <person name="Perez-Ortin J.E."/>
            <person name="Pohl T.M."/>
            <person name="Prydz H."/>
            <person name="Purnelle B."/>
            <person name="Rasmussen S.W."/>
            <person name="Remacha M.A."/>
            <person name="Revuelta J.L."/>
            <person name="Rieger M."/>
            <person name="Salom D."/>
            <person name="Saluz H.P."/>
            <person name="Saiz J.E."/>
            <person name="Saren A.-M."/>
            <person name="Schaefer M."/>
            <person name="Scharfe M."/>
            <person name="Schmidt E.R."/>
            <person name="Schneider C."/>
            <person name="Scholler P."/>
            <person name="Schwarz S."/>
            <person name="Soler-Mira A."/>
            <person name="Urrestarazu L.A."/>
            <person name="Verhasselt P."/>
            <person name="Vissers S."/>
            <person name="Voet M."/>
            <person name="Volckaert G."/>
            <person name="Wagner G."/>
            <person name="Wambutt R."/>
            <person name="Wedler E."/>
            <person name="Wedler H."/>
            <person name="Woelfl S."/>
            <person name="Harris D.E."/>
            <person name="Bowman S."/>
            <person name="Brown D."/>
            <person name="Churcher C.M."/>
            <person name="Connor R."/>
            <person name="Dedman K."/>
            <person name="Gentles S."/>
            <person name="Hamlin N."/>
            <person name="Hunt S."/>
            <person name="Jones L."/>
            <person name="McDonald S."/>
            <person name="Murphy L.D."/>
            <person name="Niblett D."/>
            <person name="Odell C."/>
            <person name="Oliver K."/>
            <person name="Rajandream M.A."/>
            <person name="Richards C."/>
            <person name="Shore L."/>
            <person name="Walsh S.V."/>
            <person name="Barrell B.G."/>
            <person name="Dietrich F.S."/>
            <person name="Mulligan J.T."/>
            <person name="Allen E."/>
            <person name="Araujo R."/>
            <person name="Aviles E."/>
            <person name="Berno A."/>
            <person name="Carpenter J."/>
            <person name="Chen E."/>
            <person name="Cherry J.M."/>
            <person name="Chung E."/>
            <person name="Duncan M."/>
            <person name="Hunicke-Smith S."/>
            <person name="Hyman R.W."/>
            <person name="Komp C."/>
            <person name="Lashkari D."/>
            <person name="Lew H."/>
            <person name="Lin D."/>
            <person name="Mosedale D."/>
            <person name="Nakahara K."/>
            <person name="Namath A."/>
            <person name="Oefner P."/>
            <person name="Oh C."/>
            <person name="Petel F.X."/>
            <person name="Roberts D."/>
            <person name="Schramm S."/>
            <person name="Schroeder M."/>
            <person name="Shogren T."/>
            <person name="Shroff N."/>
            <person name="Winant A."/>
            <person name="Yelton M.A."/>
            <person name="Botstein D."/>
            <person name="Davis R.W."/>
            <person name="Johnston M."/>
            <person name="Andrews S."/>
            <person name="Brinkman R."/>
            <person name="Cooper J."/>
            <person name="Ding H."/>
            <person name="Du Z."/>
            <person name="Favello A."/>
            <person name="Fulton L."/>
            <person name="Gattung S."/>
            <person name="Greco T."/>
            <person name="Hallsworth K."/>
            <person name="Hawkins J."/>
            <person name="Hillier L.W."/>
            <person name="Jier M."/>
            <person name="Johnson D."/>
            <person name="Johnston L."/>
            <person name="Kirsten J."/>
            <person name="Kucaba T."/>
            <person name="Langston Y."/>
            <person name="Latreille P."/>
            <person name="Le T."/>
            <person name="Mardis E."/>
            <person name="Menezes S."/>
            <person name="Miller N."/>
            <person name="Nhan M."/>
            <person name="Pauley A."/>
            <person name="Peluso D."/>
            <person name="Rifkin L."/>
            <person name="Riles L."/>
            <person name="Taich A."/>
            <person name="Trevaskis E."/>
            <person name="Vignati D."/>
            <person name="Wilcox L."/>
            <person name="Wohldman P."/>
            <person name="Vaudin M."/>
            <person name="Wilson R."/>
            <person name="Waterston R."/>
            <person name="Albermann K."/>
            <person name="Hani J."/>
            <person name="Heumann K."/>
            <person name="Kleine K."/>
            <person name="Mewes H.-W."/>
            <person name="Zollner A."/>
            <person name="Zaccaria P."/>
        </authorList>
    </citation>
    <scope>NUCLEOTIDE SEQUENCE [LARGE SCALE GENOMIC DNA]</scope>
    <source>
        <strain>ATCC 204508 / S288c</strain>
    </source>
</reference>
<reference key="4">
    <citation type="journal article" date="2014" name="G3 (Bethesda)">
        <title>The reference genome sequence of Saccharomyces cerevisiae: Then and now.</title>
        <authorList>
            <person name="Engel S.R."/>
            <person name="Dietrich F.S."/>
            <person name="Fisk D.G."/>
            <person name="Binkley G."/>
            <person name="Balakrishnan R."/>
            <person name="Costanzo M.C."/>
            <person name="Dwight S.S."/>
            <person name="Hitz B.C."/>
            <person name="Karra K."/>
            <person name="Nash R.S."/>
            <person name="Weng S."/>
            <person name="Wong E.D."/>
            <person name="Lloyd P."/>
            <person name="Skrzypek M.S."/>
            <person name="Miyasato S.R."/>
            <person name="Simison M."/>
            <person name="Cherry J.M."/>
        </authorList>
    </citation>
    <scope>GENOME REANNOTATION</scope>
    <source>
        <strain>ATCC 204508 / S288c</strain>
    </source>
</reference>
<reference key="5">
    <citation type="journal article" date="1997" name="Proc. Natl. Acad. Sci. U.S.A.">
        <title>Characterization of VPS41, a gene required for vacuolar trafficking and high-affinity iron transport in yeast.</title>
        <authorList>
            <person name="Radisky D.C."/>
            <person name="Snyder W.B."/>
            <person name="Emr S.D."/>
            <person name="Kaplan J."/>
        </authorList>
    </citation>
    <scope>CHARACTERIZATION</scope>
</reference>
<reference key="6">
    <citation type="journal article" date="2003" name="Nature">
        <title>Global analysis of protein expression in yeast.</title>
        <authorList>
            <person name="Ghaemmaghami S."/>
            <person name="Huh W.-K."/>
            <person name="Bower K."/>
            <person name="Howson R.W."/>
            <person name="Belle A."/>
            <person name="Dephoure N."/>
            <person name="O'Shea E.K."/>
            <person name="Weissman J.S."/>
        </authorList>
    </citation>
    <scope>LEVEL OF PROTEIN EXPRESSION [LARGE SCALE ANALYSIS]</scope>
</reference>
<reference key="7">
    <citation type="journal article" date="2006" name="EMBO J.">
        <title>Purification of active HOPS complex reveals its affinities for phosphoinositides and the SNARE Vam7p.</title>
        <authorList>
            <person name="Stroupe C."/>
            <person name="Collins K.M."/>
            <person name="Fratti R.A."/>
            <person name="Wickner W."/>
        </authorList>
    </citation>
    <scope>IDENTIFICATION IN THE HOPS COMPLEX</scope>
    <scope>FUNCTION OF THE HOPS COMPLEX</scope>
    <scope>INTERACTION WITH VAM7</scope>
</reference>
<reference key="8">
    <citation type="journal article" date="2008" name="Mol. Cell. Proteomics">
        <title>A multidimensional chromatography technology for in-depth phosphoproteome analysis.</title>
        <authorList>
            <person name="Albuquerque C.P."/>
            <person name="Smolka M.B."/>
            <person name="Payne S.H."/>
            <person name="Bafna V."/>
            <person name="Eng J."/>
            <person name="Zhou H."/>
        </authorList>
    </citation>
    <scope>PHOSPHORYLATION [LARGE SCALE ANALYSIS] AT SER-26 AND SER-53</scope>
    <scope>IDENTIFICATION BY MASS SPECTROMETRY [LARGE SCALE ANALYSIS]</scope>
</reference>
<reference key="9">
    <citation type="journal article" date="2009" name="Science">
        <title>Global analysis of Cdk1 substrate phosphorylation sites provides insights into evolution.</title>
        <authorList>
            <person name="Holt L.J."/>
            <person name="Tuch B.B."/>
            <person name="Villen J."/>
            <person name="Johnson A.D."/>
            <person name="Gygi S.P."/>
            <person name="Morgan D.O."/>
        </authorList>
    </citation>
    <scope>IDENTIFICATION BY MASS SPECTROMETRY [LARGE SCALE ANALYSIS]</scope>
</reference>
<dbReference type="EMBL" id="AB000223">
    <property type="protein sequence ID" value="BAA19071.1"/>
    <property type="molecule type" value="Genomic_DNA"/>
</dbReference>
<dbReference type="EMBL" id="X82086">
    <property type="protein sequence ID" value="CAA57607.1"/>
    <property type="molecule type" value="Genomic_DNA"/>
</dbReference>
<dbReference type="EMBL" id="Z74376">
    <property type="protein sequence ID" value="CAA98899.1"/>
    <property type="molecule type" value="Genomic_DNA"/>
</dbReference>
<dbReference type="EMBL" id="Z46796">
    <property type="protein sequence ID" value="CAA86802.1"/>
    <property type="molecule type" value="Genomic_DNA"/>
</dbReference>
<dbReference type="EMBL" id="BK006938">
    <property type="protein sequence ID" value="DAA11927.1"/>
    <property type="molecule type" value="Genomic_DNA"/>
</dbReference>
<dbReference type="PIR" id="S49835">
    <property type="entry name" value="S49835"/>
</dbReference>
<dbReference type="RefSeq" id="NP_010365.3">
    <property type="nucleotide sequence ID" value="NM_001180388.3"/>
</dbReference>
<dbReference type="PDB" id="7ZU0">
    <property type="method" value="EM"/>
    <property type="resolution" value="4.40 A"/>
    <property type="chains" value="F=1-992"/>
</dbReference>
<dbReference type="PDBsum" id="7ZU0"/>
<dbReference type="EMDB" id="EMD-14964"/>
<dbReference type="EMDB" id="EMD-2280"/>
<dbReference type="SMR" id="P38959"/>
<dbReference type="BioGRID" id="32136">
    <property type="interactions" value="594"/>
</dbReference>
<dbReference type="ComplexPortal" id="CPX-1625">
    <property type="entry name" value="HOPS tethering complex"/>
</dbReference>
<dbReference type="DIP" id="DIP-834N"/>
<dbReference type="FunCoup" id="P38959">
    <property type="interactions" value="839"/>
</dbReference>
<dbReference type="IntAct" id="P38959">
    <property type="interactions" value="18"/>
</dbReference>
<dbReference type="MINT" id="P38959"/>
<dbReference type="STRING" id="4932.YDR080W"/>
<dbReference type="iPTMnet" id="P38959"/>
<dbReference type="PaxDb" id="4932-YDR080W"/>
<dbReference type="PeptideAtlas" id="P38959"/>
<dbReference type="EnsemblFungi" id="YDR080W_mRNA">
    <property type="protein sequence ID" value="YDR080W"/>
    <property type="gene ID" value="YDR080W"/>
</dbReference>
<dbReference type="GeneID" id="851653"/>
<dbReference type="KEGG" id="sce:YDR080W"/>
<dbReference type="AGR" id="SGD:S000002487"/>
<dbReference type="SGD" id="S000002487">
    <property type="gene designation" value="VPS41"/>
</dbReference>
<dbReference type="VEuPathDB" id="FungiDB:YDR080W"/>
<dbReference type="eggNOG" id="KOG2066">
    <property type="taxonomic scope" value="Eukaryota"/>
</dbReference>
<dbReference type="GeneTree" id="ENSGT00390000000481"/>
<dbReference type="HOGENOM" id="CLU_001285_2_1_1"/>
<dbReference type="InParanoid" id="P38959"/>
<dbReference type="OMA" id="CYIRLQD"/>
<dbReference type="OrthoDB" id="244107at2759"/>
<dbReference type="BioCyc" id="YEAST:G3O-29685-MONOMER"/>
<dbReference type="BioGRID-ORCS" id="851653">
    <property type="hits" value="0 hits in 10 CRISPR screens"/>
</dbReference>
<dbReference type="PRO" id="PR:P38959"/>
<dbReference type="Proteomes" id="UP000002311">
    <property type="component" value="Chromosome IV"/>
</dbReference>
<dbReference type="RNAct" id="P38959">
    <property type="molecule type" value="protein"/>
</dbReference>
<dbReference type="GO" id="GO:0005768">
    <property type="term" value="C:endosome"/>
    <property type="evidence" value="ECO:0007005"/>
    <property type="project" value="SGD"/>
</dbReference>
<dbReference type="GO" id="GO:0000329">
    <property type="term" value="C:fungal-type vacuole membrane"/>
    <property type="evidence" value="ECO:0000314"/>
    <property type="project" value="SGD"/>
</dbReference>
<dbReference type="GO" id="GO:0030897">
    <property type="term" value="C:HOPS complex"/>
    <property type="evidence" value="ECO:0000353"/>
    <property type="project" value="ComplexPortal"/>
</dbReference>
<dbReference type="GO" id="GO:0005770">
    <property type="term" value="C:late endosome"/>
    <property type="evidence" value="ECO:0000318"/>
    <property type="project" value="GO_Central"/>
</dbReference>
<dbReference type="GO" id="GO:0031267">
    <property type="term" value="F:small GTPase binding"/>
    <property type="evidence" value="ECO:0000353"/>
    <property type="project" value="SGD"/>
</dbReference>
<dbReference type="GO" id="GO:0009267">
    <property type="term" value="P:cellular response to starvation"/>
    <property type="evidence" value="ECO:0000318"/>
    <property type="project" value="GO_Central"/>
</dbReference>
<dbReference type="GO" id="GO:0032258">
    <property type="term" value="P:cytoplasm to vacuole targeting by the Cvt pathway"/>
    <property type="evidence" value="ECO:0000315"/>
    <property type="project" value="SGD"/>
</dbReference>
<dbReference type="GO" id="GO:0034058">
    <property type="term" value="P:endosomal vesicle fusion"/>
    <property type="evidence" value="ECO:0000318"/>
    <property type="project" value="GO_Central"/>
</dbReference>
<dbReference type="GO" id="GO:0016236">
    <property type="term" value="P:macroautophagy"/>
    <property type="evidence" value="ECO:0000315"/>
    <property type="project" value="SGD"/>
</dbReference>
<dbReference type="GO" id="GO:0034727">
    <property type="term" value="P:piecemeal microautophagy of the nucleus"/>
    <property type="evidence" value="ECO:0000315"/>
    <property type="project" value="SGD"/>
</dbReference>
<dbReference type="GO" id="GO:0006623">
    <property type="term" value="P:protein targeting to vacuole"/>
    <property type="evidence" value="ECO:0000318"/>
    <property type="project" value="GO_Central"/>
</dbReference>
<dbReference type="GO" id="GO:0015031">
    <property type="term" value="P:protein transport"/>
    <property type="evidence" value="ECO:0000315"/>
    <property type="project" value="SGD"/>
</dbReference>
<dbReference type="GO" id="GO:0035542">
    <property type="term" value="P:regulation of SNARE complex assembly"/>
    <property type="evidence" value="ECO:0000314"/>
    <property type="project" value="SGD"/>
</dbReference>
<dbReference type="GO" id="GO:0006624">
    <property type="term" value="P:vacuolar protein processing"/>
    <property type="evidence" value="ECO:0000315"/>
    <property type="project" value="SGD"/>
</dbReference>
<dbReference type="GO" id="GO:0042144">
    <property type="term" value="P:vacuole fusion, non-autophagic"/>
    <property type="evidence" value="ECO:0000314"/>
    <property type="project" value="SGD"/>
</dbReference>
<dbReference type="GO" id="GO:0007033">
    <property type="term" value="P:vacuole organization"/>
    <property type="evidence" value="ECO:0000315"/>
    <property type="project" value="SGD"/>
</dbReference>
<dbReference type="GO" id="GO:0099022">
    <property type="term" value="P:vesicle tethering"/>
    <property type="evidence" value="ECO:0000314"/>
    <property type="project" value="SGD"/>
</dbReference>
<dbReference type="GO" id="GO:0016192">
    <property type="term" value="P:vesicle-mediated transport"/>
    <property type="evidence" value="ECO:0000315"/>
    <property type="project" value="SGD"/>
</dbReference>
<dbReference type="FunFam" id="1.25.40.10:FF:001173">
    <property type="entry name" value="Vacuolar protein sorting-associated protein 41"/>
    <property type="match status" value="1"/>
</dbReference>
<dbReference type="FunFam" id="2.130.10.10:FF:000933">
    <property type="entry name" value="Vacuolar protein sorting-associated protein 41"/>
    <property type="match status" value="1"/>
</dbReference>
<dbReference type="Gene3D" id="1.25.40.10">
    <property type="entry name" value="Tetratricopeptide repeat domain"/>
    <property type="match status" value="1"/>
</dbReference>
<dbReference type="Gene3D" id="2.130.10.10">
    <property type="entry name" value="YVTN repeat-like/Quinoprotein amine dehydrogenase"/>
    <property type="match status" value="1"/>
</dbReference>
<dbReference type="InterPro" id="IPR000547">
    <property type="entry name" value="Clathrin_H-chain/VPS_repeat"/>
</dbReference>
<dbReference type="InterPro" id="IPR011990">
    <property type="entry name" value="TPR-like_helical_dom_sf"/>
</dbReference>
<dbReference type="InterPro" id="IPR016902">
    <property type="entry name" value="VPS41"/>
</dbReference>
<dbReference type="InterPro" id="IPR045111">
    <property type="entry name" value="Vps41/Vps8"/>
</dbReference>
<dbReference type="InterPro" id="IPR015943">
    <property type="entry name" value="WD40/YVTN_repeat-like_dom_sf"/>
</dbReference>
<dbReference type="InterPro" id="IPR036322">
    <property type="entry name" value="WD40_repeat_dom_sf"/>
</dbReference>
<dbReference type="InterPro" id="IPR001680">
    <property type="entry name" value="WD40_rpt"/>
</dbReference>
<dbReference type="PANTHER" id="PTHR12616">
    <property type="entry name" value="VACUOLAR PROTEIN SORTING VPS41"/>
    <property type="match status" value="1"/>
</dbReference>
<dbReference type="PANTHER" id="PTHR12616:SF1">
    <property type="entry name" value="VACUOLAR PROTEIN SORTING-ASSOCIATED PROTEIN 41 HOMOLOG"/>
    <property type="match status" value="1"/>
</dbReference>
<dbReference type="Pfam" id="PF23411">
    <property type="entry name" value="Beta-prop_Vps41"/>
    <property type="match status" value="1"/>
</dbReference>
<dbReference type="Pfam" id="PF23556">
    <property type="entry name" value="TPR_Vps41"/>
    <property type="match status" value="1"/>
</dbReference>
<dbReference type="PIRSF" id="PIRSF028921">
    <property type="entry name" value="VPS41"/>
    <property type="match status" value="1"/>
</dbReference>
<dbReference type="SMART" id="SM00299">
    <property type="entry name" value="CLH"/>
    <property type="match status" value="1"/>
</dbReference>
<dbReference type="SMART" id="SM00320">
    <property type="entry name" value="WD40"/>
    <property type="match status" value="2"/>
</dbReference>
<dbReference type="SUPFAM" id="SSF50978">
    <property type="entry name" value="WD40 repeat-like"/>
    <property type="match status" value="1"/>
</dbReference>
<dbReference type="PROSITE" id="PS50236">
    <property type="entry name" value="CHCR"/>
    <property type="match status" value="1"/>
</dbReference>
<sequence length="992" mass="113412">MTTDNHQNDSVLDQQSGERTIDESNSISDENNVDNKREDVNVTSPTKSVSCISQAENGVASRTDESTITGSATDAETGDDDDDDDDDDDEDEDDEDEPPLLKYTRISQLPKNFFQRDSISSCLFGDTFFAFGTHSGILHLTTCAFEPIKTIKCHRSSILCINTDGKYFATGSIDGTVIIGSMDDPQNITQYDFKRPINSVALHSNFQASRMFVSGGMAGDVVLSQRNWLGNRIDIVLNKKKKKKTRKDDLSSDMKGPIMGIYTMGDLILWMDDDGITFCDVPTRSQLLNIPFPSRIFNVQDVRPDLFRPHVHFLESDRVVIGWGSNIWLFKVSFTKDSNSIKSGDSNSQSNNMSHFNPTTNIGSLLSSAASSFRGTPDKKVELECHFTVSMLITGLASFKDDQLLCLGFDIDIEEEATIDEDMKEGKNFSKRPENLLAKGNAPELKIVDLFNGDEIYNDEVIMKNYEKLSINDYHLGKHIDKTTPEYYLISSNDAIRVQELSLKDHFDWFMERKQYYKAWKIGKYVIGSEERFSIGLKFLNSLVTKKDWGTLVDHLNIIFEETLNSLDSNSYDVTQNVLKEWADIIEILITSGNIVEIAPLIPKKPALRKSVYDDVLHYFLANDMINKFHEYITKWDLKLFSVEDFEEELETRIEAASEPTASSKEEGSNITYRTELVHLYLKENKYTKAIPHLLKAKDLRALTIIKIQNLLPQYLDQIVDIILLPYKGEISHISKLSIFEIQTIFNKPIDLLFENRHTISVARIYEIFEHDCPKSFKKILFCYLIKFLDTDDSFMISPYENQLIELYSEYDRQSLLPFLQKHNNYNVESAIEVCSSKLGLYNELIYLWGKIGETKKALSLIIDELKNPQLAIDFVKNWGDSELWEFMINYSLDKPNFTKAILTCSDETSEIYLKVIRGMSDDLQIDNLQDIIKHIVQENSLSLEVRDNILVIINDETKKFANEFLKIRSQGKLFQVDESDIEINDDLNGVL</sequence>
<name>VPS41_YEAST</name>
<evidence type="ECO:0000256" key="1">
    <source>
        <dbReference type="SAM" id="MobiDB-lite"/>
    </source>
</evidence>
<evidence type="ECO:0000269" key="2">
    <source>
    </source>
</evidence>
<evidence type="ECO:0000269" key="3">
    <source>
    </source>
</evidence>
<evidence type="ECO:0000305" key="4"/>
<evidence type="ECO:0007744" key="5">
    <source>
    </source>
</evidence>
<proteinExistence type="evidence at protein level"/>
<gene>
    <name type="primary">VPS41</name>
    <name type="synonym">FET2</name>
    <name type="synonym">VAM2</name>
    <name type="ordered locus">YDR080W</name>
    <name type="ORF">D446</name>
    <name type="ORF">YD8554.13</name>
</gene>
<organism>
    <name type="scientific">Saccharomyces cerevisiae (strain ATCC 204508 / S288c)</name>
    <name type="common">Baker's yeast</name>
    <dbReference type="NCBI Taxonomy" id="559292"/>
    <lineage>
        <taxon>Eukaryota</taxon>
        <taxon>Fungi</taxon>
        <taxon>Dikarya</taxon>
        <taxon>Ascomycota</taxon>
        <taxon>Saccharomycotina</taxon>
        <taxon>Saccharomycetes</taxon>
        <taxon>Saccharomycetales</taxon>
        <taxon>Saccharomycetaceae</taxon>
        <taxon>Saccharomyces</taxon>
    </lineage>
</organism>
<accession>P38959</accession>
<accession>D6VS67</accession>
<accession>P87334</accession>
<accession>Q12011</accession>
<comment type="function">
    <text evidence="3">Required for vacuolar assembly and vacuolar traffic. Acts as component of the HOPS complex that acts during the docking stage of vacuole fusion. HOPS is an effector for the vacuolar Rab GTPase YPT7 and is required for vacuolar SNARE complex assembly. It remains bound to SNARE complexes after vacuole fusion.</text>
</comment>
<comment type="subunit">
    <text evidence="3">Component of the HOPS complex which is composed of PEP5, VPS16, PEP3, VPS33, VPS39 and VPS41. HOPS associates with phosphoinositides and the PX domain of VAM7. Interacts with VAM7 and VPS39.</text>
</comment>
<comment type="interaction">
    <interactant intactId="EBI-20432">
        <id>P38959</id>
    </interactant>
    <interactant intactId="EBI-20395">
        <id>P20795</id>
        <label>VPS33</label>
    </interactant>
    <organismsDiffer>false</organismsDiffer>
    <experiments>5</experiments>
</comment>
<comment type="subcellular location">
    <subcellularLocation>
        <location evidence="4">Vacuole</location>
    </subcellularLocation>
</comment>
<comment type="miscellaneous">
    <text evidence="2">Present with 1170 molecules/cell in log phase SD medium.</text>
</comment>
<comment type="similarity">
    <text evidence="4">Belongs to the VPS41 family.</text>
</comment>
<protein>
    <recommendedName>
        <fullName>Vacuolar protein sorting-associated protein 41</fullName>
    </recommendedName>
    <alternativeName>
        <fullName>Vacuolar morphogenesis protein 2</fullName>
    </alternativeName>
</protein>
<feature type="chain" id="PRO_0000212827" description="Vacuolar protein sorting-associated protein 41">
    <location>
        <begin position="1"/>
        <end position="992"/>
    </location>
</feature>
<feature type="repeat" description="WD 1">
    <location>
        <begin position="114"/>
        <end position="152"/>
    </location>
</feature>
<feature type="repeat" description="WD 2">
    <location>
        <begin position="153"/>
        <end position="192"/>
    </location>
</feature>
<feature type="repeat" description="WD 3">
    <location>
        <begin position="194"/>
        <end position="234"/>
    </location>
</feature>
<feature type="repeat" description="WD 4">
    <location>
        <begin position="240"/>
        <end position="280"/>
    </location>
</feature>
<feature type="repeat" description="WD 5">
    <location>
        <begin position="324"/>
        <end position="366"/>
    </location>
</feature>
<feature type="repeat" description="CHCR">
    <location>
        <begin position="753"/>
        <end position="901"/>
    </location>
</feature>
<feature type="region of interest" description="Disordered" evidence="1">
    <location>
        <begin position="1"/>
        <end position="100"/>
    </location>
</feature>
<feature type="compositionally biased region" description="Polar residues" evidence="1">
    <location>
        <begin position="1"/>
        <end position="30"/>
    </location>
</feature>
<feature type="compositionally biased region" description="Polar residues" evidence="1">
    <location>
        <begin position="41"/>
        <end position="56"/>
    </location>
</feature>
<feature type="compositionally biased region" description="Acidic residues" evidence="1">
    <location>
        <begin position="76"/>
        <end position="98"/>
    </location>
</feature>
<feature type="modified residue" description="Phosphoserine" evidence="5">
    <location>
        <position position="26"/>
    </location>
</feature>
<feature type="modified residue" description="Phosphoserine" evidence="5">
    <location>
        <position position="53"/>
    </location>
</feature>
<feature type="sequence conflict" description="In Ref. 2; CAA57607." evidence="4" ref="2">
    <original>K</original>
    <variation>M</variation>
    <location>
        <position position="424"/>
    </location>
</feature>